<dbReference type="EMBL" id="L16959">
    <property type="protein sequence ID" value="AAA20682.1"/>
    <property type="status" value="ALT_FRAME"/>
    <property type="molecule type" value="Genomic_DNA"/>
</dbReference>
<dbReference type="EMBL" id="Z73626">
    <property type="protein sequence ID" value="CAA98006.1"/>
    <property type="status" value="ALT_INIT"/>
    <property type="molecule type" value="Genomic_DNA"/>
</dbReference>
<dbReference type="EMBL" id="AY693141">
    <property type="protein sequence ID" value="AAT93160.1"/>
    <property type="status" value="ALT_INIT"/>
    <property type="molecule type" value="Genomic_DNA"/>
</dbReference>
<dbReference type="EMBL" id="BK006949">
    <property type="protein sequence ID" value="DAA11166.1"/>
    <property type="molecule type" value="Genomic_DNA"/>
</dbReference>
<dbReference type="PIR" id="S65303">
    <property type="entry name" value="S65303"/>
</dbReference>
<dbReference type="RefSeq" id="NP_015053.2">
    <property type="nucleotide sequence ID" value="NM_001184084.1"/>
</dbReference>
<dbReference type="SMR" id="P33311"/>
<dbReference type="BioGRID" id="35943">
    <property type="interactions" value="283"/>
</dbReference>
<dbReference type="DIP" id="DIP-4226N"/>
<dbReference type="FunCoup" id="P33311">
    <property type="interactions" value="684"/>
</dbReference>
<dbReference type="IntAct" id="P33311">
    <property type="interactions" value="4"/>
</dbReference>
<dbReference type="MINT" id="P33311"/>
<dbReference type="STRING" id="4932.YPL270W"/>
<dbReference type="TCDB" id="3.A.1.212.2">
    <property type="family name" value="the atp-binding cassette (abc) superfamily"/>
</dbReference>
<dbReference type="GlyGen" id="P33311">
    <property type="glycosylation" value="1 site"/>
</dbReference>
<dbReference type="PaxDb" id="4932-YPL270W"/>
<dbReference type="PeptideAtlas" id="P33311"/>
<dbReference type="EnsemblFungi" id="YPL270W_mRNA">
    <property type="protein sequence ID" value="YPL270W"/>
    <property type="gene ID" value="YPL270W"/>
</dbReference>
<dbReference type="GeneID" id="855858"/>
<dbReference type="KEGG" id="sce:YPL270W"/>
<dbReference type="AGR" id="SGD:S000006191"/>
<dbReference type="SGD" id="S000006191">
    <property type="gene designation" value="MDL2"/>
</dbReference>
<dbReference type="VEuPathDB" id="FungiDB:YPL270W"/>
<dbReference type="eggNOG" id="KOG0058">
    <property type="taxonomic scope" value="Eukaryota"/>
</dbReference>
<dbReference type="GeneTree" id="ENSGT00940000176745"/>
<dbReference type="HOGENOM" id="CLU_000604_84_3_1"/>
<dbReference type="InParanoid" id="P33311"/>
<dbReference type="OMA" id="MYTGHTL"/>
<dbReference type="OrthoDB" id="6500128at2759"/>
<dbReference type="BioCyc" id="YEAST:G3O-34152-MONOMER"/>
<dbReference type="BioGRID-ORCS" id="855858">
    <property type="hits" value="0 hits in 10 CRISPR screens"/>
</dbReference>
<dbReference type="PRO" id="PR:P33311"/>
<dbReference type="Proteomes" id="UP000002311">
    <property type="component" value="Chromosome XVI"/>
</dbReference>
<dbReference type="RNAct" id="P33311">
    <property type="molecule type" value="protein"/>
</dbReference>
<dbReference type="GO" id="GO:0005743">
    <property type="term" value="C:mitochondrial inner membrane"/>
    <property type="evidence" value="ECO:0000314"/>
    <property type="project" value="SGD"/>
</dbReference>
<dbReference type="GO" id="GO:0005739">
    <property type="term" value="C:mitochondrion"/>
    <property type="evidence" value="ECO:0007005"/>
    <property type="project" value="SGD"/>
</dbReference>
<dbReference type="GO" id="GO:0015421">
    <property type="term" value="F:ABC-type oligopeptide transporter activity"/>
    <property type="evidence" value="ECO:0000247"/>
    <property type="project" value="SGD"/>
</dbReference>
<dbReference type="GO" id="GO:0005524">
    <property type="term" value="F:ATP binding"/>
    <property type="evidence" value="ECO:0007669"/>
    <property type="project" value="UniProtKB-KW"/>
</dbReference>
<dbReference type="GO" id="GO:0016887">
    <property type="term" value="F:ATP hydrolysis activity"/>
    <property type="evidence" value="ECO:0007669"/>
    <property type="project" value="InterPro"/>
</dbReference>
<dbReference type="GO" id="GO:1904680">
    <property type="term" value="F:peptide transmembrane transporter activity"/>
    <property type="evidence" value="ECO:0007669"/>
    <property type="project" value="InterPro"/>
</dbReference>
<dbReference type="GO" id="GO:0090374">
    <property type="term" value="P:oligopeptide export from mitochondrion"/>
    <property type="evidence" value="ECO:0000247"/>
    <property type="project" value="SGD"/>
</dbReference>
<dbReference type="CDD" id="cd18573">
    <property type="entry name" value="ABC_6TM_ABCB10_like"/>
    <property type="match status" value="1"/>
</dbReference>
<dbReference type="CDD" id="cd03249">
    <property type="entry name" value="ABC_MTABC3_MDL1_MDL2"/>
    <property type="match status" value="1"/>
</dbReference>
<dbReference type="FunFam" id="1.20.1560.10:FF:000091">
    <property type="entry name" value="ATP-dependent permease MDL2"/>
    <property type="match status" value="1"/>
</dbReference>
<dbReference type="FunFam" id="3.40.50.300:FF:000218">
    <property type="entry name" value="Multidrug ABC transporter ATP-binding protein"/>
    <property type="match status" value="1"/>
</dbReference>
<dbReference type="Gene3D" id="1.20.1560.10">
    <property type="entry name" value="ABC transporter type 1, transmembrane domain"/>
    <property type="match status" value="1"/>
</dbReference>
<dbReference type="Gene3D" id="3.40.50.300">
    <property type="entry name" value="P-loop containing nucleotide triphosphate hydrolases"/>
    <property type="match status" value="1"/>
</dbReference>
<dbReference type="InterPro" id="IPR003593">
    <property type="entry name" value="AAA+_ATPase"/>
</dbReference>
<dbReference type="InterPro" id="IPR011527">
    <property type="entry name" value="ABC1_TM_dom"/>
</dbReference>
<dbReference type="InterPro" id="IPR036640">
    <property type="entry name" value="ABC1_TM_sf"/>
</dbReference>
<dbReference type="InterPro" id="IPR013305">
    <property type="entry name" value="ABC_Tap-like"/>
</dbReference>
<dbReference type="InterPro" id="IPR003439">
    <property type="entry name" value="ABC_transporter-like_ATP-bd"/>
</dbReference>
<dbReference type="InterPro" id="IPR017871">
    <property type="entry name" value="ABC_transporter-like_CS"/>
</dbReference>
<dbReference type="InterPro" id="IPR027417">
    <property type="entry name" value="P-loop_NTPase"/>
</dbReference>
<dbReference type="InterPro" id="IPR039421">
    <property type="entry name" value="Type_1_exporter"/>
</dbReference>
<dbReference type="NCBIfam" id="TIGR00958">
    <property type="entry name" value="3a01208"/>
    <property type="match status" value="1"/>
</dbReference>
<dbReference type="PANTHER" id="PTHR43394">
    <property type="entry name" value="ATP-DEPENDENT PERMEASE MDL1, MITOCHONDRIAL"/>
    <property type="match status" value="1"/>
</dbReference>
<dbReference type="PANTHER" id="PTHR43394:SF2">
    <property type="entry name" value="ATP-DEPENDENT PERMEASE MDL2, MITOCHONDRIAL"/>
    <property type="match status" value="1"/>
</dbReference>
<dbReference type="Pfam" id="PF00664">
    <property type="entry name" value="ABC_membrane"/>
    <property type="match status" value="1"/>
</dbReference>
<dbReference type="Pfam" id="PF00005">
    <property type="entry name" value="ABC_tran"/>
    <property type="match status" value="1"/>
</dbReference>
<dbReference type="PIRSF" id="PIRSF002773">
    <property type="entry name" value="ABC_prm/ATPase_B"/>
    <property type="match status" value="1"/>
</dbReference>
<dbReference type="SMART" id="SM00382">
    <property type="entry name" value="AAA"/>
    <property type="match status" value="1"/>
</dbReference>
<dbReference type="SUPFAM" id="SSF90123">
    <property type="entry name" value="ABC transporter transmembrane region"/>
    <property type="match status" value="1"/>
</dbReference>
<dbReference type="SUPFAM" id="SSF52540">
    <property type="entry name" value="P-loop containing nucleoside triphosphate hydrolases"/>
    <property type="match status" value="1"/>
</dbReference>
<dbReference type="PROSITE" id="PS50929">
    <property type="entry name" value="ABC_TM1F"/>
    <property type="match status" value="1"/>
</dbReference>
<dbReference type="PROSITE" id="PS00211">
    <property type="entry name" value="ABC_TRANSPORTER_1"/>
    <property type="match status" value="1"/>
</dbReference>
<dbReference type="PROSITE" id="PS50893">
    <property type="entry name" value="ABC_TRANSPORTER_2"/>
    <property type="match status" value="1"/>
</dbReference>
<feature type="transit peptide" description="Mitochondrion" evidence="1">
    <location>
        <begin position="1"/>
        <end position="90"/>
    </location>
</feature>
<feature type="chain" id="PRO_0000045331" description="ATP-dependent permease MDL2, mitochondrial">
    <location>
        <begin position="91"/>
        <end position="773"/>
    </location>
</feature>
<feature type="transmembrane region" description="Helical" evidence="3">
    <location>
        <begin position="123"/>
        <end position="143"/>
    </location>
</feature>
<feature type="transmembrane region" description="Helical" evidence="3">
    <location>
        <begin position="170"/>
        <end position="192"/>
    </location>
</feature>
<feature type="transmembrane region" description="Helical" evidence="3">
    <location>
        <begin position="257"/>
        <end position="277"/>
    </location>
</feature>
<feature type="domain" description="ABC transmembrane type-1" evidence="3">
    <location>
        <begin position="119"/>
        <end position="413"/>
    </location>
</feature>
<feature type="domain" description="ABC transporter" evidence="2">
    <location>
        <begin position="493"/>
        <end position="733"/>
    </location>
</feature>
<feature type="region of interest" description="Disordered" evidence="4">
    <location>
        <begin position="73"/>
        <end position="95"/>
    </location>
</feature>
<feature type="region of interest" description="Disordered" evidence="4">
    <location>
        <begin position="706"/>
        <end position="773"/>
    </location>
</feature>
<feature type="compositionally biased region" description="Polar residues" evidence="4">
    <location>
        <begin position="73"/>
        <end position="84"/>
    </location>
</feature>
<feature type="compositionally biased region" description="Basic and acidic residues" evidence="4">
    <location>
        <begin position="706"/>
        <end position="733"/>
    </location>
</feature>
<feature type="compositionally biased region" description="Basic and acidic residues" evidence="4">
    <location>
        <begin position="740"/>
        <end position="762"/>
    </location>
</feature>
<feature type="binding site" evidence="2">
    <location>
        <begin position="481"/>
        <end position="488"/>
    </location>
    <ligand>
        <name>ATP</name>
        <dbReference type="ChEBI" id="CHEBI:30616"/>
    </ligand>
</feature>
<feature type="sequence conflict" description="In Ref. 1; AAA20682." evidence="9" ref="1">
    <original>G</original>
    <variation>A</variation>
    <location>
        <position position="56"/>
    </location>
</feature>
<feature type="sequence conflict" description="In Ref. 1; AAA20682." evidence="9" ref="1">
    <original>S</original>
    <variation>C</variation>
    <location>
        <position position="265"/>
    </location>
</feature>
<feature type="sequence conflict" description="In Ref. 1; AAA20682." evidence="9" ref="1">
    <original>S</original>
    <variation>C</variation>
    <location>
        <position position="752"/>
    </location>
</feature>
<proteinExistence type="evidence at protein level"/>
<protein>
    <recommendedName>
        <fullName>ATP-dependent permease MDL2, mitochondrial</fullName>
    </recommendedName>
    <alternativeName>
        <fullName>Multidrug resistance-like protein 2</fullName>
    </alternativeName>
</protein>
<keyword id="KW-0067">ATP-binding</keyword>
<keyword id="KW-0472">Membrane</keyword>
<keyword id="KW-0496">Mitochondrion</keyword>
<keyword id="KW-0999">Mitochondrion inner membrane</keyword>
<keyword id="KW-0547">Nucleotide-binding</keyword>
<keyword id="KW-1185">Reference proteome</keyword>
<keyword id="KW-0809">Transit peptide</keyword>
<keyword id="KW-0812">Transmembrane</keyword>
<keyword id="KW-1133">Transmembrane helix</keyword>
<keyword id="KW-0813">Transport</keyword>
<comment type="subcellular location">
    <subcellularLocation>
        <location evidence="5 6 8">Mitochondrion inner membrane</location>
        <topology evidence="3 5 6 8">Multi-pass membrane protein</topology>
    </subcellularLocation>
</comment>
<comment type="miscellaneous">
    <text evidence="7">Present with 3390 molecules/cell in log phase SD medium.</text>
</comment>
<comment type="similarity">
    <text evidence="9">Belongs to the ABC transporter superfamily. ABCB family. Mitochondrial peptide exporter (TC 3.A.1.212) subfamily.</text>
</comment>
<comment type="sequence caution" evidence="9">
    <conflict type="frameshift">
        <sequence resource="EMBL-CDS" id="AAA20682"/>
    </conflict>
</comment>
<comment type="sequence caution" evidence="9">
    <conflict type="erroneous initiation">
        <sequence resource="EMBL-CDS" id="AAT93160"/>
    </conflict>
</comment>
<comment type="sequence caution" evidence="9">
    <conflict type="erroneous initiation">
        <sequence resource="EMBL-CDS" id="CAA98006"/>
    </conflict>
</comment>
<evidence type="ECO:0000255" key="1"/>
<evidence type="ECO:0000255" key="2">
    <source>
        <dbReference type="PROSITE-ProRule" id="PRU00434"/>
    </source>
</evidence>
<evidence type="ECO:0000255" key="3">
    <source>
        <dbReference type="PROSITE-ProRule" id="PRU00441"/>
    </source>
</evidence>
<evidence type="ECO:0000256" key="4">
    <source>
        <dbReference type="SAM" id="MobiDB-lite"/>
    </source>
</evidence>
<evidence type="ECO:0000269" key="5">
    <source>
    </source>
</evidence>
<evidence type="ECO:0000269" key="6">
    <source>
    </source>
</evidence>
<evidence type="ECO:0000269" key="7">
    <source>
    </source>
</evidence>
<evidence type="ECO:0000269" key="8">
    <source>
    </source>
</evidence>
<evidence type="ECO:0000305" key="9"/>
<name>MDL2_YEAST</name>
<organism>
    <name type="scientific">Saccharomyces cerevisiae (strain ATCC 204508 / S288c)</name>
    <name type="common">Baker's yeast</name>
    <dbReference type="NCBI Taxonomy" id="559292"/>
    <lineage>
        <taxon>Eukaryota</taxon>
        <taxon>Fungi</taxon>
        <taxon>Dikarya</taxon>
        <taxon>Ascomycota</taxon>
        <taxon>Saccharomycotina</taxon>
        <taxon>Saccharomycetes</taxon>
        <taxon>Saccharomycetales</taxon>
        <taxon>Saccharomycetaceae</taxon>
        <taxon>Saccharomyces</taxon>
    </lineage>
</organism>
<reference key="1">
    <citation type="journal article" date="1994" name="Yeast">
        <title>Mapping and sequencing of two yeast genes belonging to the ATP-binding cassette superfamily.</title>
        <authorList>
            <person name="Dean M.C."/>
            <person name="Allikmets R."/>
            <person name="Gerrard B.C."/>
            <person name="Stewart C."/>
            <person name="Kistler A."/>
            <person name="Shafer B."/>
            <person name="Michaelis S."/>
            <person name="Strathern J."/>
        </authorList>
    </citation>
    <scope>NUCLEOTIDE SEQUENCE [GENOMIC DNA]</scope>
    <source>
        <strain>ATCC 204508 / S288c</strain>
    </source>
</reference>
<reference key="2">
    <citation type="journal article" date="1997" name="Nature">
        <title>The nucleotide sequence of Saccharomyces cerevisiae chromosome XVI.</title>
        <authorList>
            <person name="Bussey H."/>
            <person name="Storms R.K."/>
            <person name="Ahmed A."/>
            <person name="Albermann K."/>
            <person name="Allen E."/>
            <person name="Ansorge W."/>
            <person name="Araujo R."/>
            <person name="Aparicio A."/>
            <person name="Barrell B.G."/>
            <person name="Badcock K."/>
            <person name="Benes V."/>
            <person name="Botstein D."/>
            <person name="Bowman S."/>
            <person name="Brueckner M."/>
            <person name="Carpenter J."/>
            <person name="Cherry J.M."/>
            <person name="Chung E."/>
            <person name="Churcher C.M."/>
            <person name="Coster F."/>
            <person name="Davis K."/>
            <person name="Davis R.W."/>
            <person name="Dietrich F.S."/>
            <person name="Delius H."/>
            <person name="DiPaolo T."/>
            <person name="Dubois E."/>
            <person name="Duesterhoeft A."/>
            <person name="Duncan M."/>
            <person name="Floeth M."/>
            <person name="Fortin N."/>
            <person name="Friesen J.D."/>
            <person name="Fritz C."/>
            <person name="Goffeau A."/>
            <person name="Hall J."/>
            <person name="Hebling U."/>
            <person name="Heumann K."/>
            <person name="Hilbert H."/>
            <person name="Hillier L.W."/>
            <person name="Hunicke-Smith S."/>
            <person name="Hyman R.W."/>
            <person name="Johnston M."/>
            <person name="Kalman S."/>
            <person name="Kleine K."/>
            <person name="Komp C."/>
            <person name="Kurdi O."/>
            <person name="Lashkari D."/>
            <person name="Lew H."/>
            <person name="Lin A."/>
            <person name="Lin D."/>
            <person name="Louis E.J."/>
            <person name="Marathe R."/>
            <person name="Messenguy F."/>
            <person name="Mewes H.-W."/>
            <person name="Mirtipati S."/>
            <person name="Moestl D."/>
            <person name="Mueller-Auer S."/>
            <person name="Namath A."/>
            <person name="Nentwich U."/>
            <person name="Oefner P."/>
            <person name="Pearson D."/>
            <person name="Petel F.X."/>
            <person name="Pohl T.M."/>
            <person name="Purnelle B."/>
            <person name="Rajandream M.A."/>
            <person name="Rechmann S."/>
            <person name="Rieger M."/>
            <person name="Riles L."/>
            <person name="Roberts D."/>
            <person name="Schaefer M."/>
            <person name="Scharfe M."/>
            <person name="Scherens B."/>
            <person name="Schramm S."/>
            <person name="Schroeder M."/>
            <person name="Sdicu A.-M."/>
            <person name="Tettelin H."/>
            <person name="Urrestarazu L.A."/>
            <person name="Ushinsky S."/>
            <person name="Vierendeels F."/>
            <person name="Vissers S."/>
            <person name="Voss H."/>
            <person name="Walsh S.V."/>
            <person name="Wambutt R."/>
            <person name="Wang Y."/>
            <person name="Wedler E."/>
            <person name="Wedler H."/>
            <person name="Winnett E."/>
            <person name="Zhong W.-W."/>
            <person name="Zollner A."/>
            <person name="Vo D.H."/>
            <person name="Hani J."/>
        </authorList>
    </citation>
    <scope>NUCLEOTIDE SEQUENCE [LARGE SCALE GENOMIC DNA]</scope>
    <source>
        <strain>ATCC 204508 / S288c</strain>
    </source>
</reference>
<reference key="3">
    <citation type="journal article" date="2014" name="G3 (Bethesda)">
        <title>The reference genome sequence of Saccharomyces cerevisiae: Then and now.</title>
        <authorList>
            <person name="Engel S.R."/>
            <person name="Dietrich F.S."/>
            <person name="Fisk D.G."/>
            <person name="Binkley G."/>
            <person name="Balakrishnan R."/>
            <person name="Costanzo M.C."/>
            <person name="Dwight S.S."/>
            <person name="Hitz B.C."/>
            <person name="Karra K."/>
            <person name="Nash R.S."/>
            <person name="Weng S."/>
            <person name="Wong E.D."/>
            <person name="Lloyd P."/>
            <person name="Skrzypek M.S."/>
            <person name="Miyasato S.R."/>
            <person name="Simison M."/>
            <person name="Cherry J.M."/>
        </authorList>
    </citation>
    <scope>GENOME REANNOTATION</scope>
    <source>
        <strain>ATCC 204508 / S288c</strain>
    </source>
</reference>
<reference key="4">
    <citation type="journal article" date="2007" name="Genome Res.">
        <title>Approaching a complete repository of sequence-verified protein-encoding clones for Saccharomyces cerevisiae.</title>
        <authorList>
            <person name="Hu Y."/>
            <person name="Rolfs A."/>
            <person name="Bhullar B."/>
            <person name="Murthy T.V.S."/>
            <person name="Zhu C."/>
            <person name="Berger M.F."/>
            <person name="Camargo A.A."/>
            <person name="Kelley F."/>
            <person name="McCarron S."/>
            <person name="Jepson D."/>
            <person name="Richardson A."/>
            <person name="Raphael J."/>
            <person name="Moreira D."/>
            <person name="Taycher E."/>
            <person name="Zuo D."/>
            <person name="Mohr S."/>
            <person name="Kane M.F."/>
            <person name="Williamson J."/>
            <person name="Simpson A.J.G."/>
            <person name="Bulyk M.L."/>
            <person name="Harlow E."/>
            <person name="Marsischky G."/>
            <person name="Kolodner R.D."/>
            <person name="LaBaer J."/>
        </authorList>
    </citation>
    <scope>NUCLEOTIDE SEQUENCE [GENOMIC DNA]</scope>
    <source>
        <strain>ATCC 204508 / S288c</strain>
    </source>
</reference>
<reference key="5">
    <citation type="journal article" date="2001" name="Science">
        <title>Role of the ABC transporter Mdl1 in peptide export from mitochondria.</title>
        <authorList>
            <person name="Young L."/>
            <person name="Leonhard K."/>
            <person name="Tatsuta T."/>
            <person name="Trowsdale J."/>
            <person name="Langer T."/>
        </authorList>
    </citation>
    <scope>SUBCELLULAR LOCATION</scope>
</reference>
<reference key="6">
    <citation type="journal article" date="2003" name="Nature">
        <title>Sequencing and comparison of yeast species to identify genes and regulatory elements.</title>
        <authorList>
            <person name="Kellis M."/>
            <person name="Patterson N."/>
            <person name="Endrizzi M."/>
            <person name="Birren B.W."/>
            <person name="Lander E.S."/>
        </authorList>
    </citation>
    <scope>IDENTIFICATION OF PROBABLE INITIATION SITE</scope>
</reference>
<reference key="7">
    <citation type="journal article" date="2003" name="Nature">
        <title>Global analysis of protein localization in budding yeast.</title>
        <authorList>
            <person name="Huh W.-K."/>
            <person name="Falvo J.V."/>
            <person name="Gerke L.C."/>
            <person name="Carroll A.S."/>
            <person name="Howson R.W."/>
            <person name="Weissman J.S."/>
            <person name="O'Shea E.K."/>
        </authorList>
    </citation>
    <scope>SUBCELLULAR LOCATION [LARGE SCALE ANALYSIS]</scope>
</reference>
<reference key="8">
    <citation type="journal article" date="2003" name="Nature">
        <title>Global analysis of protein expression in yeast.</title>
        <authorList>
            <person name="Ghaemmaghami S."/>
            <person name="Huh W.-K."/>
            <person name="Bower K."/>
            <person name="Howson R.W."/>
            <person name="Belle A."/>
            <person name="Dephoure N."/>
            <person name="O'Shea E.K."/>
            <person name="Weissman J.S."/>
        </authorList>
    </citation>
    <scope>LEVEL OF PROTEIN EXPRESSION [LARGE SCALE ANALYSIS]</scope>
</reference>
<reference key="9">
    <citation type="journal article" date="2003" name="Proc. Natl. Acad. Sci. U.S.A.">
        <title>The proteome of Saccharomyces cerevisiae mitochondria.</title>
        <authorList>
            <person name="Sickmann A."/>
            <person name="Reinders J."/>
            <person name="Wagner Y."/>
            <person name="Joppich C."/>
            <person name="Zahedi R.P."/>
            <person name="Meyer H.E."/>
            <person name="Schoenfisch B."/>
            <person name="Perschil I."/>
            <person name="Chacinska A."/>
            <person name="Guiard B."/>
            <person name="Rehling P."/>
            <person name="Pfanner N."/>
            <person name="Meisinger C."/>
        </authorList>
    </citation>
    <scope>SUBCELLULAR LOCATION [LARGE SCALE ANALYSIS]</scope>
    <source>
        <strain>ATCC 76625 / YPH499</strain>
    </source>
</reference>
<sequence>MLNGRLPLLRLGICRNMLSRPRLAKLPSIRFRSLVTPSSSQLIPLSRLCLRSPAVGKSLILQSFRCNSSKTVPETSLPSASPISKGSARSAHAKEQSKTDDYKDIIRLFMLAKRDWKLLLTAILLLTISCSIGMSIPKVIGIVLDTLKTSSGSDFFDLKIPIFSLPLYEFLSFFTVALLIGCAANFGRFILLRILSERVVARLRANVIKKTLHQDAEFFDNHKVGDLISRLGSDAYVVSRSMTQKVSDGVKALICGVVGVGMMCSLSPQLSILLLFFTPPVLFSASVFGKQIRNTSKDLQEATGQLTRVAEEQLSGIKTVQSFVAEGNELSRYNVAIRDIFQVGKTAAFTNAKFFTTTSLLGDLSFLTVLAYGSYLVLQSQLSIGDLTAFMLYTEYTGNAVFGLSTFYSEIMQGAGAASRLFELTDRKPSISPTVGHKYKPDRGVIEFKDVSFSYPTRPSVQIFKNLNFKIAPGSSVCIVGPSGRGKSTIALLLLRYYNPTTGTITIDNQDISKLNCKSLRRHIGIVQQEPVLMSGTIRDNITYGLTYTPTKEEIRSVAKQCFCHNFITKFPNTYDTVIGPHGTLLSGGQKQRIAIARALIKKPTILILDEATSALDVESEGAINYTFGQLMKSKSMTIVSIAHRLSTIRRSENVIVLGHDGSVVEMGKFKELYANPTSALSQLLNEKAAPGPSDQQLQIEKVIEKEDLNESKEHDDQKKDDNDDNDNNHDNDSNNQSPETKDNNSDDIEKSVEHLLKDAAKEANPIKITPQP</sequence>
<accession>P33311</accession>
<accession>D6W3A0</accession>
<accession>Q08983</accession>
<gene>
    <name type="primary">MDL2</name>
    <name type="synonym">SSH1</name>
    <name type="ordered locus">YPL270W</name>
</gene>